<gene>
    <name type="primary">petN</name>
    <name type="synonym">ycf6</name>
</gene>
<comment type="function">
    <text evidence="1">Component of the cytochrome b6-f complex, which mediates electron transfer between photosystem II (PSII) and photosystem I (PSI), cyclic electron flow around PSI, and state transitions.</text>
</comment>
<comment type="subunit">
    <text evidence="1">The 4 large subunits of the cytochrome b6-f complex are cytochrome b6, subunit IV (17 kDa polypeptide, PetD), cytochrome f and the Rieske protein, while the 4 small subunits are PetG, PetL, PetM and PetN. The complex functions as a dimer (By similarity).</text>
</comment>
<comment type="subcellular location">
    <subcellularLocation>
        <location evidence="1">Plastid</location>
        <location evidence="1">Chloroplast thylakoid membrane</location>
        <topology evidence="1">Single-pass membrane protein</topology>
    </subcellularLocation>
</comment>
<comment type="similarity">
    <text evidence="3">Belongs to the PetN family.</text>
</comment>
<accession>P61045</accession>
<accession>P12178</accession>
<accession>P56789</accession>
<proteinExistence type="evidence at protein level"/>
<name>PETN_SPIOL</name>
<sequence>MDIVSLAWAALMVVFTFSLSLVVWGRSGL</sequence>
<organism>
    <name type="scientific">Spinacia oleracea</name>
    <name type="common">Spinach</name>
    <dbReference type="NCBI Taxonomy" id="3562"/>
    <lineage>
        <taxon>Eukaryota</taxon>
        <taxon>Viridiplantae</taxon>
        <taxon>Streptophyta</taxon>
        <taxon>Embryophyta</taxon>
        <taxon>Tracheophyta</taxon>
        <taxon>Spermatophyta</taxon>
        <taxon>Magnoliopsida</taxon>
        <taxon>eudicotyledons</taxon>
        <taxon>Gunneridae</taxon>
        <taxon>Pentapetalae</taxon>
        <taxon>Caryophyllales</taxon>
        <taxon>Chenopodiaceae</taxon>
        <taxon>Chenopodioideae</taxon>
        <taxon>Anserineae</taxon>
        <taxon>Spinacia</taxon>
    </lineage>
</organism>
<reference key="1">
    <citation type="journal article" date="2001" name="Plant Mol. Biol.">
        <title>The plastid chromosome of spinach (Spinacia oleracea): complete nucleotide sequence and gene organization.</title>
        <authorList>
            <person name="Schmitz-Linneweber C."/>
            <person name="Maier R.M."/>
            <person name="Alcaraz J.-P."/>
            <person name="Cottet A."/>
            <person name="Herrmann R.G."/>
            <person name="Mache R."/>
        </authorList>
    </citation>
    <scope>NUCLEOTIDE SEQUENCE [LARGE SCALE GENOMIC DNA]</scope>
    <source>
        <strain>cv. Geant d'hiver</strain>
        <strain>cv. Monatol</strain>
    </source>
</reference>
<evidence type="ECO:0000250" key="1"/>
<evidence type="ECO:0000255" key="2"/>
<evidence type="ECO:0000305" key="3"/>
<evidence type="ECO:0007829" key="4">
    <source>
        <dbReference type="PDB" id="9ES7"/>
    </source>
</evidence>
<dbReference type="EMBL" id="AJ400848">
    <property type="protein sequence ID" value="CAB88718.1"/>
    <property type="molecule type" value="Genomic_DNA"/>
</dbReference>
<dbReference type="RefSeq" id="NP_054925.1">
    <property type="nucleotide sequence ID" value="NC_002202.1"/>
</dbReference>
<dbReference type="PDB" id="6RQF">
    <property type="method" value="EM"/>
    <property type="resolution" value="3.58 A"/>
    <property type="chains" value="H/P=1-29"/>
</dbReference>
<dbReference type="PDB" id="7QRM">
    <property type="method" value="EM"/>
    <property type="resolution" value="2.70 A"/>
    <property type="chains" value="H/P=1-29"/>
</dbReference>
<dbReference type="PDB" id="7ZYV">
    <property type="method" value="EM"/>
    <property type="resolution" value="2.13 A"/>
    <property type="chains" value="H/P=1-29"/>
</dbReference>
<dbReference type="PDB" id="9ES7">
    <property type="method" value="EM"/>
    <property type="resolution" value="1.94 A"/>
    <property type="chains" value="H/P=1-29"/>
</dbReference>
<dbReference type="PDB" id="9ES8">
    <property type="method" value="EM"/>
    <property type="resolution" value="2.24 A"/>
    <property type="chains" value="H/P=1-29"/>
</dbReference>
<dbReference type="PDB" id="9ES9">
    <property type="method" value="EM"/>
    <property type="resolution" value="2.33 A"/>
    <property type="chains" value="H/P=1-29"/>
</dbReference>
<dbReference type="PDBsum" id="6RQF"/>
<dbReference type="PDBsum" id="7QRM"/>
<dbReference type="PDBsum" id="7ZYV"/>
<dbReference type="PDBsum" id="9ES7"/>
<dbReference type="PDBsum" id="9ES8"/>
<dbReference type="PDBsum" id="9ES9"/>
<dbReference type="EMDB" id="EMD-19938"/>
<dbReference type="EMDB" id="EMD-19939"/>
<dbReference type="EMDB" id="EMD-19940"/>
<dbReference type="SMR" id="P61045"/>
<dbReference type="FunCoup" id="P61045">
    <property type="interactions" value="32"/>
</dbReference>
<dbReference type="IntAct" id="P61045">
    <property type="interactions" value="1"/>
</dbReference>
<dbReference type="STRING" id="3562.P61045"/>
<dbReference type="GeneID" id="2715693"/>
<dbReference type="KEGG" id="soe:2715693"/>
<dbReference type="InParanoid" id="P61045"/>
<dbReference type="Proteomes" id="UP001155700">
    <property type="component" value="Chloroplast Pltd"/>
</dbReference>
<dbReference type="GO" id="GO:0009535">
    <property type="term" value="C:chloroplast thylakoid membrane"/>
    <property type="evidence" value="ECO:0007669"/>
    <property type="project" value="UniProtKB-SubCell"/>
</dbReference>
<dbReference type="GO" id="GO:0009512">
    <property type="term" value="C:cytochrome b6f complex"/>
    <property type="evidence" value="ECO:0007669"/>
    <property type="project" value="InterPro"/>
</dbReference>
<dbReference type="GO" id="GO:0045158">
    <property type="term" value="F:electron transporter, transferring electrons within cytochrome b6/f complex of photosystem II activity"/>
    <property type="evidence" value="ECO:0007669"/>
    <property type="project" value="InterPro"/>
</dbReference>
<dbReference type="GO" id="GO:0017004">
    <property type="term" value="P:cytochrome complex assembly"/>
    <property type="evidence" value="ECO:0007669"/>
    <property type="project" value="UniProtKB-UniRule"/>
</dbReference>
<dbReference type="GO" id="GO:0015979">
    <property type="term" value="P:photosynthesis"/>
    <property type="evidence" value="ECO:0007669"/>
    <property type="project" value="UniProtKB-KW"/>
</dbReference>
<dbReference type="HAMAP" id="MF_00395">
    <property type="entry name" value="Cytb6_f_PetN"/>
    <property type="match status" value="1"/>
</dbReference>
<dbReference type="InterPro" id="IPR036143">
    <property type="entry name" value="Cytochr_b6-f_cplx_su8_sf"/>
</dbReference>
<dbReference type="InterPro" id="IPR005497">
    <property type="entry name" value="Cytochrome_b6-f_cplx_su8"/>
</dbReference>
<dbReference type="Pfam" id="PF03742">
    <property type="entry name" value="PetN"/>
    <property type="match status" value="1"/>
</dbReference>
<dbReference type="SUPFAM" id="SSF103451">
    <property type="entry name" value="PetN subunit of the cytochrome b6f complex"/>
    <property type="match status" value="1"/>
</dbReference>
<keyword id="KW-0002">3D-structure</keyword>
<keyword id="KW-0150">Chloroplast</keyword>
<keyword id="KW-0249">Electron transport</keyword>
<keyword id="KW-0472">Membrane</keyword>
<keyword id="KW-0602">Photosynthesis</keyword>
<keyword id="KW-0934">Plastid</keyword>
<keyword id="KW-1185">Reference proteome</keyword>
<keyword id="KW-0793">Thylakoid</keyword>
<keyword id="KW-0812">Transmembrane</keyword>
<keyword id="KW-1133">Transmembrane helix</keyword>
<keyword id="KW-0813">Transport</keyword>
<feature type="chain" id="PRO_0000217131" description="Cytochrome b6-f complex subunit 8">
    <location>
        <begin position="1"/>
        <end position="29"/>
    </location>
</feature>
<feature type="transmembrane region" description="Helical" evidence="2">
    <location>
        <begin position="3"/>
        <end position="23"/>
    </location>
</feature>
<feature type="helix" evidence="4">
    <location>
        <begin position="3"/>
        <end position="26"/>
    </location>
</feature>
<geneLocation type="chloroplast"/>
<protein>
    <recommendedName>
        <fullName>Cytochrome b6-f complex subunit 8</fullName>
    </recommendedName>
    <alternativeName>
        <fullName>Cytochrome b6-f complex subunit PetN</fullName>
    </alternativeName>
    <alternativeName>
        <fullName>Cytochrome b6-f complex subunit VIII</fullName>
    </alternativeName>
</protein>